<organism>
    <name type="scientific">Staphylococcus aureus (strain JH1)</name>
    <dbReference type="NCBI Taxonomy" id="359787"/>
    <lineage>
        <taxon>Bacteria</taxon>
        <taxon>Bacillati</taxon>
        <taxon>Bacillota</taxon>
        <taxon>Bacilli</taxon>
        <taxon>Bacillales</taxon>
        <taxon>Staphylococcaceae</taxon>
        <taxon>Staphylococcus</taxon>
    </lineage>
</organism>
<keyword id="KW-0687">Ribonucleoprotein</keyword>
<keyword id="KW-0689">Ribosomal protein</keyword>
<keyword id="KW-0694">RNA-binding</keyword>
<keyword id="KW-0699">rRNA-binding</keyword>
<proteinExistence type="inferred from homology"/>
<reference key="1">
    <citation type="submission" date="2007-06" db="EMBL/GenBank/DDBJ databases">
        <title>Complete sequence of chromosome of Staphylococcus aureus subsp. aureus JH1.</title>
        <authorList>
            <consortium name="US DOE Joint Genome Institute"/>
            <person name="Copeland A."/>
            <person name="Lucas S."/>
            <person name="Lapidus A."/>
            <person name="Barry K."/>
            <person name="Detter J.C."/>
            <person name="Glavina del Rio T."/>
            <person name="Hammon N."/>
            <person name="Israni S."/>
            <person name="Dalin E."/>
            <person name="Tice H."/>
            <person name="Pitluck S."/>
            <person name="Chain P."/>
            <person name="Malfatti S."/>
            <person name="Shin M."/>
            <person name="Vergez L."/>
            <person name="Schmutz J."/>
            <person name="Larimer F."/>
            <person name="Land M."/>
            <person name="Hauser L."/>
            <person name="Kyrpides N."/>
            <person name="Ivanova N."/>
            <person name="Tomasz A."/>
            <person name="Richardson P."/>
        </authorList>
    </citation>
    <scope>NUCLEOTIDE SEQUENCE [LARGE SCALE GENOMIC DNA]</scope>
    <source>
        <strain>JH1</strain>
    </source>
</reference>
<protein>
    <recommendedName>
        <fullName evidence="1">Small ribosomal subunit protein uS14A</fullName>
    </recommendedName>
    <alternativeName>
        <fullName evidence="2">30S ribosomal protein S14</fullName>
    </alternativeName>
</protein>
<comment type="function">
    <text evidence="1">Binds 16S rRNA, required for the assembly of 30S particles and may also be responsible for determining the conformation of the 16S rRNA at the A site.</text>
</comment>
<comment type="subunit">
    <text evidence="1">Part of the 30S ribosomal subunit. Contacts proteins S3 and S10.</text>
</comment>
<comment type="similarity">
    <text evidence="1">Belongs to the universal ribosomal protein uS14 family.</text>
</comment>
<accession>A6U1F6</accession>
<dbReference type="EMBL" id="CP000736">
    <property type="protein sequence ID" value="ABR52274.1"/>
    <property type="molecule type" value="Genomic_DNA"/>
</dbReference>
<dbReference type="SMR" id="A6U1F6"/>
<dbReference type="KEGG" id="sah:SaurJH1_1424"/>
<dbReference type="HOGENOM" id="CLU_139869_0_0_9"/>
<dbReference type="GO" id="GO:0005737">
    <property type="term" value="C:cytoplasm"/>
    <property type="evidence" value="ECO:0007669"/>
    <property type="project" value="UniProtKB-ARBA"/>
</dbReference>
<dbReference type="GO" id="GO:0015935">
    <property type="term" value="C:small ribosomal subunit"/>
    <property type="evidence" value="ECO:0007669"/>
    <property type="project" value="TreeGrafter"/>
</dbReference>
<dbReference type="GO" id="GO:0019843">
    <property type="term" value="F:rRNA binding"/>
    <property type="evidence" value="ECO:0007669"/>
    <property type="project" value="UniProtKB-UniRule"/>
</dbReference>
<dbReference type="GO" id="GO:0003735">
    <property type="term" value="F:structural constituent of ribosome"/>
    <property type="evidence" value="ECO:0007669"/>
    <property type="project" value="InterPro"/>
</dbReference>
<dbReference type="GO" id="GO:0006412">
    <property type="term" value="P:translation"/>
    <property type="evidence" value="ECO:0007669"/>
    <property type="project" value="UniProtKB-UniRule"/>
</dbReference>
<dbReference type="FunFam" id="4.10.830.10:FF:000003">
    <property type="entry name" value="30S ribosomal protein S14"/>
    <property type="match status" value="1"/>
</dbReference>
<dbReference type="Gene3D" id="4.10.830.10">
    <property type="entry name" value="30s Ribosomal Protein S14, Chain N"/>
    <property type="match status" value="1"/>
</dbReference>
<dbReference type="HAMAP" id="MF_00537">
    <property type="entry name" value="Ribosomal_uS14_1"/>
    <property type="match status" value="1"/>
</dbReference>
<dbReference type="InterPro" id="IPR001209">
    <property type="entry name" value="Ribosomal_uS14"/>
</dbReference>
<dbReference type="InterPro" id="IPR023036">
    <property type="entry name" value="Ribosomal_uS14_bac/plastid"/>
</dbReference>
<dbReference type="InterPro" id="IPR018271">
    <property type="entry name" value="Ribosomal_uS14_CS"/>
</dbReference>
<dbReference type="InterPro" id="IPR043140">
    <property type="entry name" value="Ribosomal_uS14_sf"/>
</dbReference>
<dbReference type="NCBIfam" id="NF006477">
    <property type="entry name" value="PRK08881.1"/>
    <property type="match status" value="1"/>
</dbReference>
<dbReference type="PANTHER" id="PTHR19836">
    <property type="entry name" value="30S RIBOSOMAL PROTEIN S14"/>
    <property type="match status" value="1"/>
</dbReference>
<dbReference type="PANTHER" id="PTHR19836:SF19">
    <property type="entry name" value="SMALL RIBOSOMAL SUBUNIT PROTEIN US14M"/>
    <property type="match status" value="1"/>
</dbReference>
<dbReference type="Pfam" id="PF00253">
    <property type="entry name" value="Ribosomal_S14"/>
    <property type="match status" value="1"/>
</dbReference>
<dbReference type="SUPFAM" id="SSF57716">
    <property type="entry name" value="Glucocorticoid receptor-like (DNA-binding domain)"/>
    <property type="match status" value="1"/>
</dbReference>
<dbReference type="PROSITE" id="PS00527">
    <property type="entry name" value="RIBOSOMAL_S14"/>
    <property type="match status" value="1"/>
</dbReference>
<evidence type="ECO:0000255" key="1">
    <source>
        <dbReference type="HAMAP-Rule" id="MF_00537"/>
    </source>
</evidence>
<evidence type="ECO:0000305" key="2"/>
<gene>
    <name evidence="1" type="primary">rpsN</name>
    <name type="ordered locus">SaurJH1_1424</name>
</gene>
<name>RS14_STAA2</name>
<feature type="chain" id="PRO_1000128599" description="Small ribosomal subunit protein uS14A">
    <location>
        <begin position="1"/>
        <end position="89"/>
    </location>
</feature>
<sequence length="89" mass="10540">MAKKSKIAKERKREELVNKYYELRKELKAKGDYEALRKLPRDSSPTRLTRRCKVTGRPRGVLRKFEMSRIAFREHAHKGQIPGVKKSSW</sequence>